<organism>
    <name type="scientific">Yersinia pestis (strain Pestoides F)</name>
    <dbReference type="NCBI Taxonomy" id="386656"/>
    <lineage>
        <taxon>Bacteria</taxon>
        <taxon>Pseudomonadati</taxon>
        <taxon>Pseudomonadota</taxon>
        <taxon>Gammaproteobacteria</taxon>
        <taxon>Enterobacterales</taxon>
        <taxon>Yersiniaceae</taxon>
        <taxon>Yersinia</taxon>
    </lineage>
</organism>
<reference key="1">
    <citation type="submission" date="2007-02" db="EMBL/GenBank/DDBJ databases">
        <title>Complete sequence of chromosome of Yersinia pestis Pestoides F.</title>
        <authorList>
            <consortium name="US DOE Joint Genome Institute"/>
            <person name="Copeland A."/>
            <person name="Lucas S."/>
            <person name="Lapidus A."/>
            <person name="Barry K."/>
            <person name="Detter J.C."/>
            <person name="Glavina del Rio T."/>
            <person name="Hammon N."/>
            <person name="Israni S."/>
            <person name="Dalin E."/>
            <person name="Tice H."/>
            <person name="Pitluck S."/>
            <person name="Di Bartolo G."/>
            <person name="Chain P."/>
            <person name="Malfatti S."/>
            <person name="Shin M."/>
            <person name="Vergez L."/>
            <person name="Schmutz J."/>
            <person name="Larimer F."/>
            <person name="Land M."/>
            <person name="Hauser L."/>
            <person name="Worsham P."/>
            <person name="Chu M."/>
            <person name="Bearden S."/>
            <person name="Garcia E."/>
            <person name="Richardson P."/>
        </authorList>
    </citation>
    <scope>NUCLEOTIDE SEQUENCE [LARGE SCALE GENOMIC DNA]</scope>
    <source>
        <strain>Pestoides F</strain>
    </source>
</reference>
<comment type="function">
    <text evidence="1">Catalyzes the S-adenosylmethionine monomethyl esterification of trans-aconitate.</text>
</comment>
<comment type="catalytic activity">
    <reaction evidence="1">
        <text>trans-aconitate + S-adenosyl-L-methionine = (E)-3-(methoxycarbonyl)pent-2-enedioate + S-adenosyl-L-homocysteine</text>
        <dbReference type="Rhea" id="RHEA:14969"/>
        <dbReference type="ChEBI" id="CHEBI:15708"/>
        <dbReference type="ChEBI" id="CHEBI:57470"/>
        <dbReference type="ChEBI" id="CHEBI:57856"/>
        <dbReference type="ChEBI" id="CHEBI:59789"/>
        <dbReference type="EC" id="2.1.1.144"/>
    </reaction>
</comment>
<comment type="subcellular location">
    <subcellularLocation>
        <location evidence="1">Cytoplasm</location>
    </subcellularLocation>
</comment>
<comment type="similarity">
    <text evidence="1">Belongs to the methyltransferase superfamily. Tam family.</text>
</comment>
<keyword id="KW-0963">Cytoplasm</keyword>
<keyword id="KW-0489">Methyltransferase</keyword>
<keyword id="KW-0949">S-adenosyl-L-methionine</keyword>
<keyword id="KW-0808">Transferase</keyword>
<feature type="chain" id="PRO_1000056588" description="Trans-aconitate 2-methyltransferase">
    <location>
        <begin position="1"/>
        <end position="258"/>
    </location>
</feature>
<accession>A4TLZ2</accession>
<gene>
    <name evidence="1" type="primary">tam</name>
    <name type="ordered locus">YPDSF_1921</name>
</gene>
<proteinExistence type="inferred from homology"/>
<sequence length="258" mass="29353">MQDWDPDLYRQFEAERTRPATDLLAHITITSPQFISDLGCGPGNSTELLHRRFPDAQLVGIDHSQAMLASAQQRLPHCTFIEADIHQWRPSQPQNLIYANASLQWLTDHPHLFPSLLSQLAPRGVLAVQMPDNLDQPSHRAMREVAENGPWQQTLQEAGATRAKVLSANHYYDLLAPHAERVDIWRTTYYHPMPSAQAIVDWLRATGLRPYLAPLTEAMQLAFLQNYLAIIDKAYPARTDGRRLLAFPRLFIVAHAQR</sequence>
<protein>
    <recommendedName>
        <fullName evidence="1">Trans-aconitate 2-methyltransferase</fullName>
        <ecNumber evidence="1">2.1.1.144</ecNumber>
    </recommendedName>
</protein>
<evidence type="ECO:0000255" key="1">
    <source>
        <dbReference type="HAMAP-Rule" id="MF_00560"/>
    </source>
</evidence>
<name>TAM_YERPP</name>
<dbReference type="EC" id="2.1.1.144" evidence="1"/>
<dbReference type="EMBL" id="CP000668">
    <property type="protein sequence ID" value="ABP40304.1"/>
    <property type="molecule type" value="Genomic_DNA"/>
</dbReference>
<dbReference type="RefSeq" id="WP_002210232.1">
    <property type="nucleotide sequence ID" value="NZ_CP009715.1"/>
</dbReference>
<dbReference type="SMR" id="A4TLZ2"/>
<dbReference type="GeneID" id="57976176"/>
<dbReference type="KEGG" id="ypp:YPDSF_1921"/>
<dbReference type="PATRIC" id="fig|386656.14.peg.3383"/>
<dbReference type="GO" id="GO:0005737">
    <property type="term" value="C:cytoplasm"/>
    <property type="evidence" value="ECO:0007669"/>
    <property type="project" value="UniProtKB-SubCell"/>
</dbReference>
<dbReference type="GO" id="GO:0030798">
    <property type="term" value="F:trans-aconitate 2-methyltransferase activity"/>
    <property type="evidence" value="ECO:0007669"/>
    <property type="project" value="UniProtKB-UniRule"/>
</dbReference>
<dbReference type="GO" id="GO:0032259">
    <property type="term" value="P:methylation"/>
    <property type="evidence" value="ECO:0007669"/>
    <property type="project" value="UniProtKB-KW"/>
</dbReference>
<dbReference type="CDD" id="cd02440">
    <property type="entry name" value="AdoMet_MTases"/>
    <property type="match status" value="1"/>
</dbReference>
<dbReference type="Gene3D" id="1.10.150.290">
    <property type="entry name" value="S-adenosyl-L-methionine-dependent methyltransferases"/>
    <property type="match status" value="1"/>
</dbReference>
<dbReference type="Gene3D" id="3.40.50.150">
    <property type="entry name" value="Vaccinia Virus protein VP39"/>
    <property type="match status" value="1"/>
</dbReference>
<dbReference type="HAMAP" id="MF_00560">
    <property type="entry name" value="Tran_acon_Me_trans"/>
    <property type="match status" value="1"/>
</dbReference>
<dbReference type="InterPro" id="IPR041698">
    <property type="entry name" value="Methyltransf_25"/>
</dbReference>
<dbReference type="InterPro" id="IPR029063">
    <property type="entry name" value="SAM-dependent_MTases_sf"/>
</dbReference>
<dbReference type="InterPro" id="IPR023506">
    <property type="entry name" value="Trans-aconitate_MeTrfase"/>
</dbReference>
<dbReference type="InterPro" id="IPR023149">
    <property type="entry name" value="Trans_acon_MeTrfase_C"/>
</dbReference>
<dbReference type="NCBIfam" id="NF002463">
    <property type="entry name" value="PRK01683.1"/>
    <property type="match status" value="1"/>
</dbReference>
<dbReference type="PANTHER" id="PTHR43861:SF1">
    <property type="entry name" value="TRANS-ACONITATE 2-METHYLTRANSFERASE"/>
    <property type="match status" value="1"/>
</dbReference>
<dbReference type="PANTHER" id="PTHR43861">
    <property type="entry name" value="TRANS-ACONITATE 2-METHYLTRANSFERASE-RELATED"/>
    <property type="match status" value="1"/>
</dbReference>
<dbReference type="Pfam" id="PF13649">
    <property type="entry name" value="Methyltransf_25"/>
    <property type="match status" value="1"/>
</dbReference>
<dbReference type="SUPFAM" id="SSF53335">
    <property type="entry name" value="S-adenosyl-L-methionine-dependent methyltransferases"/>
    <property type="match status" value="1"/>
</dbReference>